<comment type="function">
    <text evidence="1">Plays an essential role in the virus replication cycle by acting as a viroporin. Creates a pore in the host endoplasmic reticulum and as a consequence releases Ca(2+) in the cytoplasm of infected cell. In turn, high levels of cytoplasmic calcium trigger membrane trafficking and transport of viral ER-associated proteins to viroplasms, sites of viral genome replication and immature particle assembly.</text>
</comment>
<comment type="function">
    <text evidence="1">The secreted form acts as an enterotoxin that causes phospholipase C-dependent elevation of the intracellular calcium concentration in host intestinal mucosa cells. Increased concentration of intracellular calcium disrupts the cytoskeleton and the tight junctions, raising the paracellular permeability. Potentiates chloride ion secretion through a calcium ion-dependent signaling pathway, inducing age-dependent diarrhea. To perform this enterotoxigenic role in vivo, NSP4 is released from infected enterocytes in a soluble form capable of diffusing within the intestinal lumen and interacting with host plasma membrane receptors on neighboring epithelial cells such as integrins ITGA1/ITGB1 and ITGA2/ITGB1.</text>
</comment>
<comment type="subunit">
    <text evidence="1">Homotetramer. Interacts with the immature particle in the viroplasm. Interacts with host CAV1, early and late in infection. Interacts with host integrin ITGA1/ITGB1 heterodimer. Interacts with host integrin ITGA2/ITGB1 heterodimer. Interaction with microtubules blocks trafficking to the Golgi apparatus.</text>
</comment>
<comment type="subcellular location">
    <subcellularLocation>
        <location evidence="1">Host rough endoplasmic reticulum membrane</location>
        <topology evidence="1">Single-pass type III membrane protein</topology>
    </subcellularLocation>
    <subcellularLocation>
        <location evidence="1">Host membrane</location>
        <location evidence="1">Host caveola</location>
        <topology evidence="1">Single-pass type III membrane protein</topology>
    </subcellularLocation>
    <subcellularLocation>
        <location evidence="1">Secreted</location>
    </subcellularLocation>
    <text evidence="1">NSP4 also localizes in vesicular structures which contain autophagosomal markers and associate with viroplasms in virus-infected cells. Additionally, a soluble form of glycosylated NSP4 is secreted despite retention of its transmembrane domain.</text>
</comment>
<comment type="domain">
    <text evidence="1">Binds 1 calcium ion per tetramer.</text>
</comment>
<comment type="PTM">
    <text evidence="1">The N-glycosyl content is primarily Man(9)GlcNAc, with a small amount of Man(8)GlcNAc.</text>
</comment>
<comment type="similarity">
    <text evidence="1">Belongs to the rotavirus NSP4 family.</text>
</comment>
<name>NSP4_ROTH2</name>
<accession>P30030</accession>
<organismHost>
    <name type="scientific">Homo sapiens</name>
    <name type="common">Human</name>
    <dbReference type="NCBI Taxonomy" id="9606"/>
</organismHost>
<evidence type="ECO:0000255" key="1">
    <source>
        <dbReference type="HAMAP-Rule" id="MF_04091"/>
    </source>
</evidence>
<proteinExistence type="inferred from homology"/>
<reference key="1">
    <citation type="journal article" date="1992" name="J. Gen. Virol.">
        <title>Nucleotide sequences of normal and rearranged RNA segments 10 of human rotaviruses.</title>
        <authorList>
            <person name="Ballard A."/>
            <person name="McCrae M.A."/>
            <person name="Desselberger U."/>
        </authorList>
    </citation>
    <scope>NUCLEOTIDE SEQUENCE [GENOMIC RNA]</scope>
</reference>
<protein>
    <recommendedName>
        <fullName evidence="1">Non-structural glycoprotein 4</fullName>
        <shortName evidence="1">NSP4</shortName>
    </recommendedName>
    <alternativeName>
        <fullName evidence="1">NCVP5</fullName>
    </alternativeName>
    <alternativeName>
        <fullName evidence="1">NS28</fullName>
    </alternativeName>
</protein>
<keyword id="KW-1072">Activation of host autophagy by virus</keyword>
<keyword id="KW-0106">Calcium</keyword>
<keyword id="KW-0260">Enterotoxin</keyword>
<keyword id="KW-0325">Glycoprotein</keyword>
<keyword id="KW-1038">Host endoplasmic reticulum</keyword>
<keyword id="KW-1043">Host membrane</keyword>
<keyword id="KW-0945">Host-virus interaction</keyword>
<keyword id="KW-0407">Ion channel</keyword>
<keyword id="KW-0406">Ion transport</keyword>
<keyword id="KW-0472">Membrane</keyword>
<keyword id="KW-0479">Metal-binding</keyword>
<keyword id="KW-0964">Secreted</keyword>
<keyword id="KW-0735">Signal-anchor</keyword>
<keyword id="KW-0800">Toxin</keyword>
<keyword id="KW-0812">Transmembrane</keyword>
<keyword id="KW-1133">Transmembrane helix</keyword>
<keyword id="KW-0813">Transport</keyword>
<keyword id="KW-1182">Viral ion channel</keyword>
<keyword id="KW-0843">Virulence</keyword>
<feature type="chain" id="PRO_0000149624" description="Non-structural glycoprotein 4">
    <location>
        <begin position="1"/>
        <end position="175"/>
    </location>
</feature>
<feature type="topological domain" description="Lumenal" evidence="1">
    <location>
        <begin position="1"/>
        <end position="28"/>
    </location>
</feature>
<feature type="transmembrane region" description="Helical; Signal-anchor for type III membrane protein" evidence="1">
    <location>
        <begin position="29"/>
        <end position="51"/>
    </location>
</feature>
<feature type="topological domain" description="Cytoplasmic" evidence="1">
    <location>
        <begin position="52"/>
        <end position="175"/>
    </location>
</feature>
<feature type="binding site" evidence="1">
    <location>
        <position position="120"/>
    </location>
    <ligand>
        <name>Ca(2+)</name>
        <dbReference type="ChEBI" id="CHEBI:29108"/>
    </ligand>
</feature>
<feature type="binding site" evidence="1">
    <location>
        <position position="123"/>
    </location>
    <ligand>
        <name>Ca(2+)</name>
        <dbReference type="ChEBI" id="CHEBI:29108"/>
    </ligand>
</feature>
<feature type="glycosylation site" description="N-linked (GlcNAc...) asparagine; by host" evidence="1">
    <location>
        <position position="8"/>
    </location>
</feature>
<feature type="glycosylation site" description="N-linked (GlcNAc...) asparagine; by host" evidence="1">
    <location>
        <position position="18"/>
    </location>
</feature>
<sequence>MEKLTDLNYTLSVITLMNSTLHTILEDPGMAYFPYIASVLTVLFTLHRASIPTMKIALKTSKCSYKVVKYCIVTIFNTLLKLAGYKEQITTKDEIEKQMDRVVKEMRRQFEMIDKLTTREIEQVELLKRIYDKLMVRATDGIDMTKEINQKNVKTLEEWKSGKNPYEPKEVTAAM</sequence>
<organism>
    <name type="scientific">Rotavirus A (strain RVA/Human/United Kingdom/A28/1987/G10P[X])</name>
    <name type="common">RV-A</name>
    <dbReference type="NCBI Taxonomy" id="31571"/>
    <lineage>
        <taxon>Viruses</taxon>
        <taxon>Riboviria</taxon>
        <taxon>Orthornavirae</taxon>
        <taxon>Duplornaviricota</taxon>
        <taxon>Resentoviricetes</taxon>
        <taxon>Reovirales</taxon>
        <taxon>Sedoreoviridae</taxon>
        <taxon>Rotavirus</taxon>
        <taxon>Rotavirus A</taxon>
    </lineage>
</organism>
<dbReference type="EMBL" id="D10771">
    <property type="protein sequence ID" value="BAA01602.1"/>
    <property type="molecule type" value="Genomic_RNA"/>
</dbReference>
<dbReference type="PIR" id="JQ1449">
    <property type="entry name" value="VGXRA2"/>
</dbReference>
<dbReference type="SMR" id="P30030"/>
<dbReference type="GO" id="GO:0005576">
    <property type="term" value="C:extracellular region"/>
    <property type="evidence" value="ECO:0007669"/>
    <property type="project" value="UniProtKB-SubCell"/>
</dbReference>
<dbReference type="GO" id="GO:0044155">
    <property type="term" value="C:host caveola"/>
    <property type="evidence" value="ECO:0007669"/>
    <property type="project" value="UniProtKB-SubCell"/>
</dbReference>
<dbReference type="GO" id="GO:0044169">
    <property type="term" value="C:host cell rough endoplasmic reticulum membrane"/>
    <property type="evidence" value="ECO:0007669"/>
    <property type="project" value="UniProtKB-SubCell"/>
</dbReference>
<dbReference type="GO" id="GO:0016020">
    <property type="term" value="C:membrane"/>
    <property type="evidence" value="ECO:0007669"/>
    <property type="project" value="UniProtKB-UniRule"/>
</dbReference>
<dbReference type="GO" id="GO:0015267">
    <property type="term" value="F:channel activity"/>
    <property type="evidence" value="ECO:0007669"/>
    <property type="project" value="UniProtKB-KW"/>
</dbReference>
<dbReference type="GO" id="GO:0046872">
    <property type="term" value="F:metal ion binding"/>
    <property type="evidence" value="ECO:0007669"/>
    <property type="project" value="UniProtKB-UniRule"/>
</dbReference>
<dbReference type="GO" id="GO:0090729">
    <property type="term" value="F:toxin activity"/>
    <property type="evidence" value="ECO:0007669"/>
    <property type="project" value="UniProtKB-UniRule"/>
</dbReference>
<dbReference type="GO" id="GO:0034220">
    <property type="term" value="P:monoatomic ion transmembrane transport"/>
    <property type="evidence" value="ECO:0007669"/>
    <property type="project" value="UniProtKB-KW"/>
</dbReference>
<dbReference type="GO" id="GO:0039520">
    <property type="term" value="P:symbiont-mediated activation of host autophagy"/>
    <property type="evidence" value="ECO:0007669"/>
    <property type="project" value="UniProtKB-KW"/>
</dbReference>
<dbReference type="GO" id="GO:0016032">
    <property type="term" value="P:viral process"/>
    <property type="evidence" value="ECO:0007669"/>
    <property type="project" value="UniProtKB-UniRule"/>
</dbReference>
<dbReference type="FunFam" id="1.20.5.430:FF:000005">
    <property type="entry name" value="Non-structural glycoprotein 4"/>
    <property type="match status" value="1"/>
</dbReference>
<dbReference type="Gene3D" id="1.20.5.430">
    <property type="match status" value="1"/>
</dbReference>
<dbReference type="HAMAP" id="MF_04091">
    <property type="entry name" value="ROTA_NSP4"/>
    <property type="match status" value="1"/>
</dbReference>
<dbReference type="InterPro" id="IPR002107">
    <property type="entry name" value="Rotavirus_NSP4"/>
</dbReference>
<dbReference type="Pfam" id="PF01452">
    <property type="entry name" value="Rota_NSP4"/>
    <property type="match status" value="1"/>
</dbReference>
<dbReference type="SUPFAM" id="SSF58030">
    <property type="entry name" value="Rotavirus nonstructural proteins"/>
    <property type="match status" value="1"/>
</dbReference>